<gene>
    <name type="primary">PDH2</name>
</gene>
<reference key="1">
    <citation type="journal article" date="1994" name="Biochem. Biophys. Res. Commun.">
        <title>Molecular cloning of two pigment-dispersing hormone (PDH) precursors in the blue crab Callinectes sapidus reveals a novel member of the PDH neuropeptide family.</title>
        <authorList>
            <person name="Klein J.M."/>
            <person name="Mohrherr C.J."/>
            <person name="Sleutels F."/>
            <person name="Riehm J.P."/>
            <person name="Rao K.R."/>
        </authorList>
    </citation>
    <scope>NUCLEOTIDE SEQUENCE [MRNA]</scope>
    <source>
        <tissue>Eyestalk</tissue>
    </source>
</reference>
<keyword id="KW-0027">Amidation</keyword>
<keyword id="KW-0165">Cleavage on pair of basic residues</keyword>
<keyword id="KW-0372">Hormone</keyword>
<keyword id="KW-0529">Neurotransmitter</keyword>
<keyword id="KW-0964">Secreted</keyword>
<keyword id="KW-0732">Signal</keyword>
<protein>
    <recommendedName>
        <fullName>Pigment-dispersing hormone 2 peptides</fullName>
    </recommendedName>
    <component>
        <recommendedName>
            <fullName>PDH precursor-related peptide 2</fullName>
        </recommendedName>
    </component>
    <component>
        <recommendedName>
            <fullName>Pigment-dispersing hormone 2</fullName>
            <shortName>PDH 2</shortName>
        </recommendedName>
    </component>
</protein>
<comment type="function">
    <text evidence="1">The pigment-dispersing hormone causes the migration of the distal retinal pigment into the proximal end of the pigment chromatophore cells and thus decreases the amount of light entering the retinulas. May also function as a neurotransmitter and/or neuromodulator (By similarity).</text>
</comment>
<comment type="subcellular location">
    <subcellularLocation>
        <location>Secreted</location>
    </subcellularLocation>
</comment>
<comment type="tissue specificity">
    <text>Eyestalk sinus gland.</text>
</comment>
<comment type="similarity">
    <text evidence="3">Belongs to the arthropod PDH family.</text>
</comment>
<organism>
    <name type="scientific">Callinectes sapidus</name>
    <name type="common">Blue crab</name>
    <dbReference type="NCBI Taxonomy" id="6763"/>
    <lineage>
        <taxon>Eukaryota</taxon>
        <taxon>Metazoa</taxon>
        <taxon>Ecdysozoa</taxon>
        <taxon>Arthropoda</taxon>
        <taxon>Crustacea</taxon>
        <taxon>Multicrustacea</taxon>
        <taxon>Malacostraca</taxon>
        <taxon>Eumalacostraca</taxon>
        <taxon>Eucarida</taxon>
        <taxon>Decapoda</taxon>
        <taxon>Pleocyemata</taxon>
        <taxon>Brachyura</taxon>
        <taxon>Eubrachyura</taxon>
        <taxon>Portunoidea</taxon>
        <taxon>Portunidae</taxon>
        <taxon>Portuninae</taxon>
        <taxon>Callinectes</taxon>
    </lineage>
</organism>
<accession>Q23756</accession>
<dbReference type="EMBL" id="L36717">
    <property type="protein sequence ID" value="AAA67053.1"/>
    <property type="molecule type" value="mRNA"/>
</dbReference>
<dbReference type="PIR" id="JC2427">
    <property type="entry name" value="JC2427"/>
</dbReference>
<dbReference type="SMR" id="Q23756"/>
<dbReference type="GO" id="GO:0005576">
    <property type="term" value="C:extracellular region"/>
    <property type="evidence" value="ECO:0007669"/>
    <property type="project" value="UniProtKB-SubCell"/>
</dbReference>
<dbReference type="GO" id="GO:0045202">
    <property type="term" value="C:synapse"/>
    <property type="evidence" value="ECO:0007669"/>
    <property type="project" value="GOC"/>
</dbReference>
<dbReference type="GO" id="GO:0005179">
    <property type="term" value="F:hormone activity"/>
    <property type="evidence" value="ECO:0007669"/>
    <property type="project" value="UniProtKB-KW"/>
</dbReference>
<dbReference type="GO" id="GO:0007268">
    <property type="term" value="P:chemical synaptic transmission"/>
    <property type="evidence" value="ECO:0007669"/>
    <property type="project" value="UniProtKB-KW"/>
</dbReference>
<evidence type="ECO:0000250" key="1"/>
<evidence type="ECO:0000255" key="2"/>
<evidence type="ECO:0000305" key="3"/>
<proteinExistence type="evidence at transcript level"/>
<feature type="signal peptide" evidence="2">
    <location>
        <begin position="1"/>
        <end position="21"/>
    </location>
</feature>
<feature type="peptide" id="PRO_0000023429" description="PDH precursor-related peptide 2">
    <location>
        <begin position="22"/>
        <end position="55"/>
    </location>
</feature>
<feature type="peptide" id="PRO_0000023430" description="Pigment-dispersing hormone 2">
    <location>
        <begin position="58"/>
        <end position="75"/>
    </location>
</feature>
<feature type="modified residue" description="Alanine amide" evidence="1">
    <location>
        <position position="75"/>
    </location>
</feature>
<name>PDH2_CALSI</name>
<sequence length="78" mass="8344">MRSGVFVAVLVVVVFALLTQGQELHVPEREAVANLAARILKIVHAPHDAAAGVPHKRNSELINSLLGISALMNEAGRR</sequence>